<evidence type="ECO:0000255" key="1">
    <source>
        <dbReference type="HAMAP-Rule" id="MF_01456"/>
    </source>
</evidence>
<comment type="function">
    <text evidence="1">NDH-1 shuttles electrons from NADH, via FMN and iron-sulfur (Fe-S) centers, to quinones in the respiratory chain. The immediate electron acceptor for the enzyme in this species is believed to be ubiquinone. Couples the redox reaction to proton translocation (for every two electrons transferred, four hydrogen ions are translocated across the cytoplasmic membrane), and thus conserves the redox energy in a proton gradient.</text>
</comment>
<comment type="catalytic activity">
    <reaction evidence="1">
        <text>a quinone + NADH + 5 H(+)(in) = a quinol + NAD(+) + 4 H(+)(out)</text>
        <dbReference type="Rhea" id="RHEA:57888"/>
        <dbReference type="ChEBI" id="CHEBI:15378"/>
        <dbReference type="ChEBI" id="CHEBI:24646"/>
        <dbReference type="ChEBI" id="CHEBI:57540"/>
        <dbReference type="ChEBI" id="CHEBI:57945"/>
        <dbReference type="ChEBI" id="CHEBI:132124"/>
    </reaction>
</comment>
<comment type="subunit">
    <text evidence="1">NDH-1 is composed of 14 different subunits. Subunits NuoA, H, J, K, L, M, N constitute the membrane sector of the complex.</text>
</comment>
<comment type="subcellular location">
    <subcellularLocation>
        <location evidence="1">Cell inner membrane</location>
        <topology evidence="1">Multi-pass membrane protein</topology>
    </subcellularLocation>
</comment>
<comment type="similarity">
    <text evidence="1">Belongs to the complex I subunit 4L family.</text>
</comment>
<accession>B0VU47</accession>
<reference key="1">
    <citation type="journal article" date="2008" name="PLoS ONE">
        <title>Comparative analysis of Acinetobacters: three genomes for three lifestyles.</title>
        <authorList>
            <person name="Vallenet D."/>
            <person name="Nordmann P."/>
            <person name="Barbe V."/>
            <person name="Poirel L."/>
            <person name="Mangenot S."/>
            <person name="Bataille E."/>
            <person name="Dossat C."/>
            <person name="Gas S."/>
            <person name="Kreimeyer A."/>
            <person name="Lenoble P."/>
            <person name="Oztas S."/>
            <person name="Poulain J."/>
            <person name="Segurens B."/>
            <person name="Robert C."/>
            <person name="Abergel C."/>
            <person name="Claverie J.-M."/>
            <person name="Raoult D."/>
            <person name="Medigue C."/>
            <person name="Weissenbach J."/>
            <person name="Cruveiller S."/>
        </authorList>
    </citation>
    <scope>NUCLEOTIDE SEQUENCE [LARGE SCALE GENOMIC DNA]</scope>
    <source>
        <strain>SDF</strain>
    </source>
</reference>
<organism>
    <name type="scientific">Acinetobacter baumannii (strain SDF)</name>
    <dbReference type="NCBI Taxonomy" id="509170"/>
    <lineage>
        <taxon>Bacteria</taxon>
        <taxon>Pseudomonadati</taxon>
        <taxon>Pseudomonadota</taxon>
        <taxon>Gammaproteobacteria</taxon>
        <taxon>Moraxellales</taxon>
        <taxon>Moraxellaceae</taxon>
        <taxon>Acinetobacter</taxon>
        <taxon>Acinetobacter calcoaceticus/baumannii complex</taxon>
    </lineage>
</organism>
<sequence>MGQIPLEHGLIVATILFALGFYGVMVRRNLLFMLMSLEIMMNAAALAFVLAGSVWAQPDGQVMFILILTLAAAEACIGLAIVLQFYHRFHHLDVDAASEMRG</sequence>
<keyword id="KW-0997">Cell inner membrane</keyword>
<keyword id="KW-1003">Cell membrane</keyword>
<keyword id="KW-0472">Membrane</keyword>
<keyword id="KW-0520">NAD</keyword>
<keyword id="KW-0874">Quinone</keyword>
<keyword id="KW-1278">Translocase</keyword>
<keyword id="KW-0812">Transmembrane</keyword>
<keyword id="KW-1133">Transmembrane helix</keyword>
<keyword id="KW-0813">Transport</keyword>
<keyword id="KW-0830">Ubiquinone</keyword>
<feature type="chain" id="PRO_0000389918" description="NADH-quinone oxidoreductase subunit K">
    <location>
        <begin position="1"/>
        <end position="102"/>
    </location>
</feature>
<feature type="transmembrane region" description="Helical" evidence="1">
    <location>
        <begin position="6"/>
        <end position="26"/>
    </location>
</feature>
<feature type="transmembrane region" description="Helical" evidence="1">
    <location>
        <begin position="30"/>
        <end position="50"/>
    </location>
</feature>
<feature type="transmembrane region" description="Helical" evidence="1">
    <location>
        <begin position="62"/>
        <end position="82"/>
    </location>
</feature>
<protein>
    <recommendedName>
        <fullName evidence="1">NADH-quinone oxidoreductase subunit K</fullName>
        <ecNumber evidence="1">7.1.1.-</ecNumber>
    </recommendedName>
    <alternativeName>
        <fullName evidence="1">NADH dehydrogenase I subunit K</fullName>
    </alternativeName>
    <alternativeName>
        <fullName evidence="1">NDH-1 subunit K</fullName>
    </alternativeName>
</protein>
<dbReference type="EC" id="7.1.1.-" evidence="1"/>
<dbReference type="EMBL" id="CU468230">
    <property type="protein sequence ID" value="CAP02010.1"/>
    <property type="molecule type" value="Genomic_DNA"/>
</dbReference>
<dbReference type="SMR" id="B0VU47"/>
<dbReference type="KEGG" id="abm:ABSDF2705"/>
<dbReference type="HOGENOM" id="CLU_144724_0_1_6"/>
<dbReference type="Proteomes" id="UP000001741">
    <property type="component" value="Chromosome"/>
</dbReference>
<dbReference type="GO" id="GO:0030964">
    <property type="term" value="C:NADH dehydrogenase complex"/>
    <property type="evidence" value="ECO:0007669"/>
    <property type="project" value="TreeGrafter"/>
</dbReference>
<dbReference type="GO" id="GO:0005886">
    <property type="term" value="C:plasma membrane"/>
    <property type="evidence" value="ECO:0007669"/>
    <property type="project" value="UniProtKB-SubCell"/>
</dbReference>
<dbReference type="GO" id="GO:0050136">
    <property type="term" value="F:NADH:ubiquinone reductase (non-electrogenic) activity"/>
    <property type="evidence" value="ECO:0007669"/>
    <property type="project" value="UniProtKB-UniRule"/>
</dbReference>
<dbReference type="GO" id="GO:0048038">
    <property type="term" value="F:quinone binding"/>
    <property type="evidence" value="ECO:0007669"/>
    <property type="project" value="UniProtKB-KW"/>
</dbReference>
<dbReference type="GO" id="GO:0042773">
    <property type="term" value="P:ATP synthesis coupled electron transport"/>
    <property type="evidence" value="ECO:0007669"/>
    <property type="project" value="InterPro"/>
</dbReference>
<dbReference type="FunFam" id="1.10.287.3510:FF:000001">
    <property type="entry name" value="NADH-quinone oxidoreductase subunit K"/>
    <property type="match status" value="1"/>
</dbReference>
<dbReference type="Gene3D" id="1.10.287.3510">
    <property type="match status" value="1"/>
</dbReference>
<dbReference type="HAMAP" id="MF_01456">
    <property type="entry name" value="NDH1_NuoK"/>
    <property type="match status" value="1"/>
</dbReference>
<dbReference type="InterPro" id="IPR001133">
    <property type="entry name" value="NADH_UbQ_OxRdtase_chain4L/K"/>
</dbReference>
<dbReference type="InterPro" id="IPR039428">
    <property type="entry name" value="NUOK/Mnh_C1-like"/>
</dbReference>
<dbReference type="NCBIfam" id="NF004319">
    <property type="entry name" value="PRK05715.1-1"/>
    <property type="match status" value="1"/>
</dbReference>
<dbReference type="NCBIfam" id="NF004320">
    <property type="entry name" value="PRK05715.1-2"/>
    <property type="match status" value="1"/>
</dbReference>
<dbReference type="PANTHER" id="PTHR11434:SF16">
    <property type="entry name" value="NADH-UBIQUINONE OXIDOREDUCTASE CHAIN 4L"/>
    <property type="match status" value="1"/>
</dbReference>
<dbReference type="PANTHER" id="PTHR11434">
    <property type="entry name" value="NADH-UBIQUINONE OXIDOREDUCTASE SUBUNIT ND4L"/>
    <property type="match status" value="1"/>
</dbReference>
<dbReference type="Pfam" id="PF00420">
    <property type="entry name" value="Oxidored_q2"/>
    <property type="match status" value="1"/>
</dbReference>
<name>NUOK_ACIBS</name>
<gene>
    <name evidence="1" type="primary">nuoK</name>
    <name type="ordered locus">ABSDF2705</name>
</gene>
<proteinExistence type="inferred from homology"/>